<gene>
    <name evidence="1" type="primary">atpC</name>
    <name type="ordered locus">Atu2621</name>
    <name type="ORF">AGR_C_4751</name>
</gene>
<dbReference type="EMBL" id="AE007869">
    <property type="protein sequence ID" value="AAK88342.1"/>
    <property type="molecule type" value="Genomic_DNA"/>
</dbReference>
<dbReference type="PIR" id="AD2898">
    <property type="entry name" value="AD2898"/>
</dbReference>
<dbReference type="PIR" id="E97673">
    <property type="entry name" value="E97673"/>
</dbReference>
<dbReference type="RefSeq" id="NP_355557.1">
    <property type="nucleotide sequence ID" value="NC_003062.2"/>
</dbReference>
<dbReference type="RefSeq" id="WP_006310765.1">
    <property type="nucleotide sequence ID" value="NC_003062.2"/>
</dbReference>
<dbReference type="SMR" id="Q8UC77"/>
<dbReference type="STRING" id="176299.Atu2621"/>
<dbReference type="EnsemblBacteria" id="AAK88342">
    <property type="protein sequence ID" value="AAK88342"/>
    <property type="gene ID" value="Atu2621"/>
</dbReference>
<dbReference type="GeneID" id="1134659"/>
<dbReference type="KEGG" id="atu:Atu2621"/>
<dbReference type="PATRIC" id="fig|176299.10.peg.2624"/>
<dbReference type="eggNOG" id="COG0355">
    <property type="taxonomic scope" value="Bacteria"/>
</dbReference>
<dbReference type="HOGENOM" id="CLU_084338_2_1_5"/>
<dbReference type="OrthoDB" id="9799969at2"/>
<dbReference type="PhylomeDB" id="Q8UC77"/>
<dbReference type="BioCyc" id="AGRO:ATU2621-MONOMER"/>
<dbReference type="Proteomes" id="UP000000813">
    <property type="component" value="Chromosome circular"/>
</dbReference>
<dbReference type="GO" id="GO:0005886">
    <property type="term" value="C:plasma membrane"/>
    <property type="evidence" value="ECO:0007669"/>
    <property type="project" value="UniProtKB-SubCell"/>
</dbReference>
<dbReference type="GO" id="GO:0045259">
    <property type="term" value="C:proton-transporting ATP synthase complex"/>
    <property type="evidence" value="ECO:0007669"/>
    <property type="project" value="UniProtKB-KW"/>
</dbReference>
<dbReference type="GO" id="GO:0005524">
    <property type="term" value="F:ATP binding"/>
    <property type="evidence" value="ECO:0007669"/>
    <property type="project" value="UniProtKB-UniRule"/>
</dbReference>
<dbReference type="GO" id="GO:0046933">
    <property type="term" value="F:proton-transporting ATP synthase activity, rotational mechanism"/>
    <property type="evidence" value="ECO:0007669"/>
    <property type="project" value="UniProtKB-UniRule"/>
</dbReference>
<dbReference type="CDD" id="cd12152">
    <property type="entry name" value="F1-ATPase_delta"/>
    <property type="match status" value="1"/>
</dbReference>
<dbReference type="Gene3D" id="2.60.15.10">
    <property type="entry name" value="F0F1 ATP synthase delta/epsilon subunit, N-terminal"/>
    <property type="match status" value="1"/>
</dbReference>
<dbReference type="HAMAP" id="MF_00530">
    <property type="entry name" value="ATP_synth_epsil_bac"/>
    <property type="match status" value="1"/>
</dbReference>
<dbReference type="InterPro" id="IPR001469">
    <property type="entry name" value="ATP_synth_F1_dsu/esu"/>
</dbReference>
<dbReference type="InterPro" id="IPR020546">
    <property type="entry name" value="ATP_synth_F1_dsu/esu_N"/>
</dbReference>
<dbReference type="InterPro" id="IPR036771">
    <property type="entry name" value="ATPsynth_dsu/esu_N"/>
</dbReference>
<dbReference type="NCBIfam" id="TIGR01216">
    <property type="entry name" value="ATP_synt_epsi"/>
    <property type="match status" value="1"/>
</dbReference>
<dbReference type="NCBIfam" id="NF001851">
    <property type="entry name" value="PRK00571.2-4"/>
    <property type="match status" value="1"/>
</dbReference>
<dbReference type="PANTHER" id="PTHR13822">
    <property type="entry name" value="ATP SYNTHASE DELTA/EPSILON CHAIN"/>
    <property type="match status" value="1"/>
</dbReference>
<dbReference type="PANTHER" id="PTHR13822:SF10">
    <property type="entry name" value="ATP SYNTHASE EPSILON CHAIN, CHLOROPLASTIC"/>
    <property type="match status" value="1"/>
</dbReference>
<dbReference type="Pfam" id="PF02823">
    <property type="entry name" value="ATP-synt_DE_N"/>
    <property type="match status" value="1"/>
</dbReference>
<dbReference type="SUPFAM" id="SSF51344">
    <property type="entry name" value="Epsilon subunit of F1F0-ATP synthase N-terminal domain"/>
    <property type="match status" value="1"/>
</dbReference>
<comment type="function">
    <text evidence="1">Produces ATP from ADP in the presence of a proton gradient across the membrane.</text>
</comment>
<comment type="subunit">
    <text>F-type ATPases have 2 components, CF(1) - the catalytic core - and CF(0) - the membrane proton channel. CF(1) has five subunits: alpha(3), beta(3), gamma(1), delta(1), epsilon(1). CF(0) has three main subunits: a, b and c.</text>
</comment>
<comment type="subcellular location">
    <subcellularLocation>
        <location evidence="1">Cell inner membrane</location>
        <topology evidence="1">Peripheral membrane protein</topology>
    </subcellularLocation>
</comment>
<comment type="similarity">
    <text evidence="1">Belongs to the ATPase epsilon chain family.</text>
</comment>
<keyword id="KW-0066">ATP synthesis</keyword>
<keyword id="KW-0997">Cell inner membrane</keyword>
<keyword id="KW-1003">Cell membrane</keyword>
<keyword id="KW-0139">CF(1)</keyword>
<keyword id="KW-0375">Hydrogen ion transport</keyword>
<keyword id="KW-0406">Ion transport</keyword>
<keyword id="KW-0472">Membrane</keyword>
<keyword id="KW-1185">Reference proteome</keyword>
<keyword id="KW-0813">Transport</keyword>
<name>ATPE_AGRFC</name>
<sequence length="136" mass="14764">MADSFKFDLVSPERLLVSETVTEVVIPATLGEMTVLANHAPTMTTIKPGLVTVKFASGETHKYVVFGGFADILPTGCTLLAESAVSADDMSPDTLQKRIDAAKAEIQEGNHHHEHLTKLEKHLYELTNLHEVLVAA</sequence>
<accession>Q8UC77</accession>
<feature type="chain" id="PRO_0000188086" description="ATP synthase epsilon chain">
    <location>
        <begin position="1"/>
        <end position="136"/>
    </location>
</feature>
<evidence type="ECO:0000255" key="1">
    <source>
        <dbReference type="HAMAP-Rule" id="MF_00530"/>
    </source>
</evidence>
<protein>
    <recommendedName>
        <fullName evidence="1">ATP synthase epsilon chain</fullName>
    </recommendedName>
    <alternativeName>
        <fullName evidence="1">ATP synthase F1 sector epsilon subunit</fullName>
    </alternativeName>
    <alternativeName>
        <fullName evidence="1">F-ATPase epsilon subunit</fullName>
    </alternativeName>
</protein>
<reference key="1">
    <citation type="journal article" date="2001" name="Science">
        <title>The genome of the natural genetic engineer Agrobacterium tumefaciens C58.</title>
        <authorList>
            <person name="Wood D.W."/>
            <person name="Setubal J.C."/>
            <person name="Kaul R."/>
            <person name="Monks D.E."/>
            <person name="Kitajima J.P."/>
            <person name="Okura V.K."/>
            <person name="Zhou Y."/>
            <person name="Chen L."/>
            <person name="Wood G.E."/>
            <person name="Almeida N.F. Jr."/>
            <person name="Woo L."/>
            <person name="Chen Y."/>
            <person name="Paulsen I.T."/>
            <person name="Eisen J.A."/>
            <person name="Karp P.D."/>
            <person name="Bovee D. Sr."/>
            <person name="Chapman P."/>
            <person name="Clendenning J."/>
            <person name="Deatherage G."/>
            <person name="Gillet W."/>
            <person name="Grant C."/>
            <person name="Kutyavin T."/>
            <person name="Levy R."/>
            <person name="Li M.-J."/>
            <person name="McClelland E."/>
            <person name="Palmieri A."/>
            <person name="Raymond C."/>
            <person name="Rouse G."/>
            <person name="Saenphimmachak C."/>
            <person name="Wu Z."/>
            <person name="Romero P."/>
            <person name="Gordon D."/>
            <person name="Zhang S."/>
            <person name="Yoo H."/>
            <person name="Tao Y."/>
            <person name="Biddle P."/>
            <person name="Jung M."/>
            <person name="Krespan W."/>
            <person name="Perry M."/>
            <person name="Gordon-Kamm B."/>
            <person name="Liao L."/>
            <person name="Kim S."/>
            <person name="Hendrick C."/>
            <person name="Zhao Z.-Y."/>
            <person name="Dolan M."/>
            <person name="Chumley F."/>
            <person name="Tingey S.V."/>
            <person name="Tomb J.-F."/>
            <person name="Gordon M.P."/>
            <person name="Olson M.V."/>
            <person name="Nester E.W."/>
        </authorList>
    </citation>
    <scope>NUCLEOTIDE SEQUENCE [LARGE SCALE GENOMIC DNA]</scope>
    <source>
        <strain>C58 / ATCC 33970</strain>
    </source>
</reference>
<reference key="2">
    <citation type="journal article" date="2001" name="Science">
        <title>Genome sequence of the plant pathogen and biotechnology agent Agrobacterium tumefaciens C58.</title>
        <authorList>
            <person name="Goodner B."/>
            <person name="Hinkle G."/>
            <person name="Gattung S."/>
            <person name="Miller N."/>
            <person name="Blanchard M."/>
            <person name="Qurollo B."/>
            <person name="Goldman B.S."/>
            <person name="Cao Y."/>
            <person name="Askenazi M."/>
            <person name="Halling C."/>
            <person name="Mullin L."/>
            <person name="Houmiel K."/>
            <person name="Gordon J."/>
            <person name="Vaudin M."/>
            <person name="Iartchouk O."/>
            <person name="Epp A."/>
            <person name="Liu F."/>
            <person name="Wollam C."/>
            <person name="Allinger M."/>
            <person name="Doughty D."/>
            <person name="Scott C."/>
            <person name="Lappas C."/>
            <person name="Markelz B."/>
            <person name="Flanagan C."/>
            <person name="Crowell C."/>
            <person name="Gurson J."/>
            <person name="Lomo C."/>
            <person name="Sear C."/>
            <person name="Strub G."/>
            <person name="Cielo C."/>
            <person name="Slater S."/>
        </authorList>
    </citation>
    <scope>NUCLEOTIDE SEQUENCE [LARGE SCALE GENOMIC DNA]</scope>
    <source>
        <strain>C58 / ATCC 33970</strain>
    </source>
</reference>
<proteinExistence type="inferred from homology"/>
<organism>
    <name type="scientific">Agrobacterium fabrum (strain C58 / ATCC 33970)</name>
    <name type="common">Agrobacterium tumefaciens (strain C58)</name>
    <dbReference type="NCBI Taxonomy" id="176299"/>
    <lineage>
        <taxon>Bacteria</taxon>
        <taxon>Pseudomonadati</taxon>
        <taxon>Pseudomonadota</taxon>
        <taxon>Alphaproteobacteria</taxon>
        <taxon>Hyphomicrobiales</taxon>
        <taxon>Rhizobiaceae</taxon>
        <taxon>Rhizobium/Agrobacterium group</taxon>
        <taxon>Agrobacterium</taxon>
        <taxon>Agrobacterium tumefaciens complex</taxon>
    </lineage>
</organism>